<protein>
    <recommendedName>
        <fullName evidence="1">Large ribosomal subunit protein uL30</fullName>
    </recommendedName>
    <alternativeName>
        <fullName evidence="2">50S ribosomal protein L30</fullName>
    </alternativeName>
</protein>
<proteinExistence type="inferred from homology"/>
<gene>
    <name evidence="1" type="primary">rpmD</name>
    <name type="ordered locus">FTM_1509</name>
</gene>
<evidence type="ECO:0000255" key="1">
    <source>
        <dbReference type="HAMAP-Rule" id="MF_01371"/>
    </source>
</evidence>
<evidence type="ECO:0000305" key="2"/>
<feature type="chain" id="PRO_1000144687" description="Large ribosomal subunit protein uL30">
    <location>
        <begin position="1"/>
        <end position="61"/>
    </location>
</feature>
<sequence length="61" mass="6871">MTQAKTFKVTLVKSLIGRKENHIASARGLGLRKINHTVEVLDTPENRGMANKIYYMVKIEG</sequence>
<dbReference type="EMBL" id="CP000915">
    <property type="protein sequence ID" value="ACD31331.1"/>
    <property type="molecule type" value="Genomic_DNA"/>
</dbReference>
<dbReference type="SMR" id="B2SDW7"/>
<dbReference type="KEGG" id="ftm:FTM_1509"/>
<dbReference type="HOGENOM" id="CLU_131047_1_4_6"/>
<dbReference type="GO" id="GO:0022625">
    <property type="term" value="C:cytosolic large ribosomal subunit"/>
    <property type="evidence" value="ECO:0007669"/>
    <property type="project" value="TreeGrafter"/>
</dbReference>
<dbReference type="GO" id="GO:0003735">
    <property type="term" value="F:structural constituent of ribosome"/>
    <property type="evidence" value="ECO:0007669"/>
    <property type="project" value="InterPro"/>
</dbReference>
<dbReference type="GO" id="GO:0006412">
    <property type="term" value="P:translation"/>
    <property type="evidence" value="ECO:0007669"/>
    <property type="project" value="UniProtKB-UniRule"/>
</dbReference>
<dbReference type="CDD" id="cd01658">
    <property type="entry name" value="Ribosomal_L30"/>
    <property type="match status" value="1"/>
</dbReference>
<dbReference type="FunFam" id="3.30.1390.20:FF:000001">
    <property type="entry name" value="50S ribosomal protein L30"/>
    <property type="match status" value="1"/>
</dbReference>
<dbReference type="Gene3D" id="3.30.1390.20">
    <property type="entry name" value="Ribosomal protein L30, ferredoxin-like fold domain"/>
    <property type="match status" value="1"/>
</dbReference>
<dbReference type="HAMAP" id="MF_01371_B">
    <property type="entry name" value="Ribosomal_uL30_B"/>
    <property type="match status" value="1"/>
</dbReference>
<dbReference type="InterPro" id="IPR036919">
    <property type="entry name" value="Ribo_uL30_ferredoxin-like_sf"/>
</dbReference>
<dbReference type="InterPro" id="IPR005996">
    <property type="entry name" value="Ribosomal_uL30_bac-type"/>
</dbReference>
<dbReference type="InterPro" id="IPR016082">
    <property type="entry name" value="Ribosomal_uL30_ferredoxin-like"/>
</dbReference>
<dbReference type="NCBIfam" id="TIGR01308">
    <property type="entry name" value="rpmD_bact"/>
    <property type="match status" value="1"/>
</dbReference>
<dbReference type="PANTHER" id="PTHR15892:SF2">
    <property type="entry name" value="LARGE RIBOSOMAL SUBUNIT PROTEIN UL30M"/>
    <property type="match status" value="1"/>
</dbReference>
<dbReference type="PANTHER" id="PTHR15892">
    <property type="entry name" value="MITOCHONDRIAL RIBOSOMAL PROTEIN L30"/>
    <property type="match status" value="1"/>
</dbReference>
<dbReference type="Pfam" id="PF00327">
    <property type="entry name" value="Ribosomal_L30"/>
    <property type="match status" value="1"/>
</dbReference>
<dbReference type="PIRSF" id="PIRSF002211">
    <property type="entry name" value="Ribosomal_L30_bac-type"/>
    <property type="match status" value="1"/>
</dbReference>
<dbReference type="SUPFAM" id="SSF55129">
    <property type="entry name" value="Ribosomal protein L30p/L7e"/>
    <property type="match status" value="1"/>
</dbReference>
<accession>B2SDW7</accession>
<organism>
    <name type="scientific">Francisella tularensis subsp. mediasiatica (strain FSC147)</name>
    <dbReference type="NCBI Taxonomy" id="441952"/>
    <lineage>
        <taxon>Bacteria</taxon>
        <taxon>Pseudomonadati</taxon>
        <taxon>Pseudomonadota</taxon>
        <taxon>Gammaproteobacteria</taxon>
        <taxon>Thiotrichales</taxon>
        <taxon>Francisellaceae</taxon>
        <taxon>Francisella</taxon>
    </lineage>
</organism>
<keyword id="KW-0687">Ribonucleoprotein</keyword>
<keyword id="KW-0689">Ribosomal protein</keyword>
<name>RL30_FRATM</name>
<comment type="subunit">
    <text evidence="1">Part of the 50S ribosomal subunit.</text>
</comment>
<comment type="similarity">
    <text evidence="1">Belongs to the universal ribosomal protein uL30 family.</text>
</comment>
<reference key="1">
    <citation type="journal article" date="2009" name="PLoS Pathog.">
        <title>Molecular evolutionary consequences of niche restriction in Francisella tularensis, a facultative intracellular pathogen.</title>
        <authorList>
            <person name="Larsson P."/>
            <person name="Elfsmark D."/>
            <person name="Svensson K."/>
            <person name="Wikstroem P."/>
            <person name="Forsman M."/>
            <person name="Brettin T."/>
            <person name="Keim P."/>
            <person name="Johansson A."/>
        </authorList>
    </citation>
    <scope>NUCLEOTIDE SEQUENCE [LARGE SCALE GENOMIC DNA]</scope>
    <source>
        <strain>FSC147</strain>
    </source>
</reference>